<evidence type="ECO:0000255" key="1">
    <source>
        <dbReference type="HAMAP-Rule" id="MF_01619"/>
    </source>
</evidence>
<accession>B1LFD8</accession>
<name>MAO1_ECOSM</name>
<gene>
    <name evidence="1" type="primary">maeA</name>
    <name type="ordered locus">EcSMS35_1695</name>
</gene>
<reference key="1">
    <citation type="journal article" date="2008" name="J. Bacteriol.">
        <title>Insights into the environmental resistance gene pool from the genome sequence of the multidrug-resistant environmental isolate Escherichia coli SMS-3-5.</title>
        <authorList>
            <person name="Fricke W.F."/>
            <person name="Wright M.S."/>
            <person name="Lindell A.H."/>
            <person name="Harkins D.M."/>
            <person name="Baker-Austin C."/>
            <person name="Ravel J."/>
            <person name="Stepanauskas R."/>
        </authorList>
    </citation>
    <scope>NUCLEOTIDE SEQUENCE [LARGE SCALE GENOMIC DNA]</scope>
    <source>
        <strain>SMS-3-5 / SECEC</strain>
    </source>
</reference>
<feature type="chain" id="PRO_1000185997" description="NAD-dependent malic enzyme">
    <location>
        <begin position="1"/>
        <end position="565"/>
    </location>
</feature>
<feature type="active site" description="Proton donor" evidence="1">
    <location>
        <position position="104"/>
    </location>
</feature>
<feature type="active site" description="Proton acceptor" evidence="1">
    <location>
        <position position="175"/>
    </location>
</feature>
<feature type="binding site" evidence="1">
    <location>
        <position position="157"/>
    </location>
    <ligand>
        <name>NAD(+)</name>
        <dbReference type="ChEBI" id="CHEBI:57540"/>
    </ligand>
</feature>
<feature type="binding site" evidence="1">
    <location>
        <position position="246"/>
    </location>
    <ligand>
        <name>a divalent metal cation</name>
        <dbReference type="ChEBI" id="CHEBI:60240"/>
    </ligand>
</feature>
<feature type="binding site" evidence="1">
    <location>
        <position position="247"/>
    </location>
    <ligand>
        <name>a divalent metal cation</name>
        <dbReference type="ChEBI" id="CHEBI:60240"/>
    </ligand>
</feature>
<feature type="binding site" evidence="1">
    <location>
        <position position="270"/>
    </location>
    <ligand>
        <name>a divalent metal cation</name>
        <dbReference type="ChEBI" id="CHEBI:60240"/>
    </ligand>
</feature>
<feature type="binding site" evidence="1">
    <location>
        <position position="270"/>
    </location>
    <ligand>
        <name>NAD(+)</name>
        <dbReference type="ChEBI" id="CHEBI:57540"/>
    </ligand>
</feature>
<feature type="binding site" evidence="1">
    <location>
        <position position="418"/>
    </location>
    <ligand>
        <name>NAD(+)</name>
        <dbReference type="ChEBI" id="CHEBI:57540"/>
    </ligand>
</feature>
<feature type="site" description="Important for activity" evidence="1">
    <location>
        <position position="270"/>
    </location>
</feature>
<organism>
    <name type="scientific">Escherichia coli (strain SMS-3-5 / SECEC)</name>
    <dbReference type="NCBI Taxonomy" id="439855"/>
    <lineage>
        <taxon>Bacteria</taxon>
        <taxon>Pseudomonadati</taxon>
        <taxon>Pseudomonadota</taxon>
        <taxon>Gammaproteobacteria</taxon>
        <taxon>Enterobacterales</taxon>
        <taxon>Enterobacteriaceae</taxon>
        <taxon>Escherichia</taxon>
    </lineage>
</organism>
<comment type="catalytic activity">
    <reaction evidence="1">
        <text>(S)-malate + NAD(+) = pyruvate + CO2 + NADH</text>
        <dbReference type="Rhea" id="RHEA:12653"/>
        <dbReference type="ChEBI" id="CHEBI:15361"/>
        <dbReference type="ChEBI" id="CHEBI:15589"/>
        <dbReference type="ChEBI" id="CHEBI:16526"/>
        <dbReference type="ChEBI" id="CHEBI:57540"/>
        <dbReference type="ChEBI" id="CHEBI:57945"/>
        <dbReference type="EC" id="1.1.1.38"/>
    </reaction>
</comment>
<comment type="catalytic activity">
    <reaction evidence="1">
        <text>oxaloacetate + H(+) = pyruvate + CO2</text>
        <dbReference type="Rhea" id="RHEA:15641"/>
        <dbReference type="ChEBI" id="CHEBI:15361"/>
        <dbReference type="ChEBI" id="CHEBI:15378"/>
        <dbReference type="ChEBI" id="CHEBI:16452"/>
        <dbReference type="ChEBI" id="CHEBI:16526"/>
        <dbReference type="EC" id="1.1.1.38"/>
    </reaction>
</comment>
<comment type="cofactor">
    <cofactor evidence="1">
        <name>Mg(2+)</name>
        <dbReference type="ChEBI" id="CHEBI:18420"/>
    </cofactor>
    <cofactor evidence="1">
        <name>Mn(2+)</name>
        <dbReference type="ChEBI" id="CHEBI:29035"/>
    </cofactor>
    <text evidence="1">Divalent metal cations. Prefers magnesium or manganese.</text>
</comment>
<comment type="subunit">
    <text evidence="1">Homotetramer.</text>
</comment>
<comment type="similarity">
    <text evidence="1">Belongs to the malic enzymes family.</text>
</comment>
<keyword id="KW-0479">Metal-binding</keyword>
<keyword id="KW-0520">NAD</keyword>
<keyword id="KW-0560">Oxidoreductase</keyword>
<dbReference type="EC" id="1.1.1.38" evidence="1"/>
<dbReference type="EMBL" id="CP000970">
    <property type="protein sequence ID" value="ACB18009.1"/>
    <property type="molecule type" value="Genomic_DNA"/>
</dbReference>
<dbReference type="RefSeq" id="WP_000433471.1">
    <property type="nucleotide sequence ID" value="NC_010498.1"/>
</dbReference>
<dbReference type="SMR" id="B1LFD8"/>
<dbReference type="KEGG" id="ecm:EcSMS35_1695"/>
<dbReference type="HOGENOM" id="CLU_011405_5_2_6"/>
<dbReference type="Proteomes" id="UP000007011">
    <property type="component" value="Chromosome"/>
</dbReference>
<dbReference type="GO" id="GO:0005829">
    <property type="term" value="C:cytosol"/>
    <property type="evidence" value="ECO:0007669"/>
    <property type="project" value="TreeGrafter"/>
</dbReference>
<dbReference type="GO" id="GO:0004471">
    <property type="term" value="F:malate dehydrogenase (decarboxylating) (NAD+) activity"/>
    <property type="evidence" value="ECO:0007669"/>
    <property type="project" value="UniProtKB-UniRule"/>
</dbReference>
<dbReference type="GO" id="GO:0046872">
    <property type="term" value="F:metal ion binding"/>
    <property type="evidence" value="ECO:0007669"/>
    <property type="project" value="UniProtKB-KW"/>
</dbReference>
<dbReference type="GO" id="GO:0051287">
    <property type="term" value="F:NAD binding"/>
    <property type="evidence" value="ECO:0007669"/>
    <property type="project" value="InterPro"/>
</dbReference>
<dbReference type="GO" id="GO:0008948">
    <property type="term" value="F:oxaloacetate decarboxylase activity"/>
    <property type="evidence" value="ECO:0007669"/>
    <property type="project" value="UniProtKB-UniRule"/>
</dbReference>
<dbReference type="GO" id="GO:0006108">
    <property type="term" value="P:malate metabolic process"/>
    <property type="evidence" value="ECO:0007669"/>
    <property type="project" value="TreeGrafter"/>
</dbReference>
<dbReference type="CDD" id="cd05312">
    <property type="entry name" value="NAD_bind_1_malic_enz"/>
    <property type="match status" value="1"/>
</dbReference>
<dbReference type="FunFam" id="3.40.50.10380:FF:000001">
    <property type="entry name" value="NAD-dependent malic enzyme"/>
    <property type="match status" value="1"/>
</dbReference>
<dbReference type="FunFam" id="3.40.50.720:FF:000055">
    <property type="entry name" value="NAD-dependent malic enzyme"/>
    <property type="match status" value="1"/>
</dbReference>
<dbReference type="Gene3D" id="3.40.50.10380">
    <property type="entry name" value="Malic enzyme, N-terminal domain"/>
    <property type="match status" value="1"/>
</dbReference>
<dbReference type="Gene3D" id="3.40.50.720">
    <property type="entry name" value="NAD(P)-binding Rossmann-like Domain"/>
    <property type="match status" value="1"/>
</dbReference>
<dbReference type="HAMAP" id="MF_01619">
    <property type="entry name" value="NAD_malic_enz"/>
    <property type="match status" value="1"/>
</dbReference>
<dbReference type="InterPro" id="IPR046346">
    <property type="entry name" value="Aminoacid_DH-like_N_sf"/>
</dbReference>
<dbReference type="InterPro" id="IPR015884">
    <property type="entry name" value="Malic_enzyme_CS"/>
</dbReference>
<dbReference type="InterPro" id="IPR012301">
    <property type="entry name" value="Malic_N_dom"/>
</dbReference>
<dbReference type="InterPro" id="IPR037062">
    <property type="entry name" value="Malic_N_dom_sf"/>
</dbReference>
<dbReference type="InterPro" id="IPR012302">
    <property type="entry name" value="Malic_NAD-bd"/>
</dbReference>
<dbReference type="InterPro" id="IPR001891">
    <property type="entry name" value="Malic_OxRdtase"/>
</dbReference>
<dbReference type="InterPro" id="IPR036291">
    <property type="entry name" value="NAD(P)-bd_dom_sf"/>
</dbReference>
<dbReference type="InterPro" id="IPR023667">
    <property type="entry name" value="NAD_malic_enz_proteobac"/>
</dbReference>
<dbReference type="NCBIfam" id="NF010052">
    <property type="entry name" value="PRK13529.1"/>
    <property type="match status" value="1"/>
</dbReference>
<dbReference type="PANTHER" id="PTHR23406">
    <property type="entry name" value="MALIC ENZYME-RELATED"/>
    <property type="match status" value="1"/>
</dbReference>
<dbReference type="PANTHER" id="PTHR23406:SF34">
    <property type="entry name" value="NAD-DEPENDENT MALIC ENZYME, MITOCHONDRIAL"/>
    <property type="match status" value="1"/>
</dbReference>
<dbReference type="Pfam" id="PF00390">
    <property type="entry name" value="malic"/>
    <property type="match status" value="1"/>
</dbReference>
<dbReference type="Pfam" id="PF03949">
    <property type="entry name" value="Malic_M"/>
    <property type="match status" value="1"/>
</dbReference>
<dbReference type="PIRSF" id="PIRSF000106">
    <property type="entry name" value="ME"/>
    <property type="match status" value="1"/>
</dbReference>
<dbReference type="PRINTS" id="PR00072">
    <property type="entry name" value="MALOXRDTASE"/>
</dbReference>
<dbReference type="SMART" id="SM01274">
    <property type="entry name" value="malic"/>
    <property type="match status" value="1"/>
</dbReference>
<dbReference type="SMART" id="SM00919">
    <property type="entry name" value="Malic_M"/>
    <property type="match status" value="1"/>
</dbReference>
<dbReference type="SUPFAM" id="SSF53223">
    <property type="entry name" value="Aminoacid dehydrogenase-like, N-terminal domain"/>
    <property type="match status" value="1"/>
</dbReference>
<dbReference type="SUPFAM" id="SSF51735">
    <property type="entry name" value="NAD(P)-binding Rossmann-fold domains"/>
    <property type="match status" value="1"/>
</dbReference>
<dbReference type="PROSITE" id="PS00331">
    <property type="entry name" value="MALIC_ENZYMES"/>
    <property type="match status" value="1"/>
</dbReference>
<proteinExistence type="inferred from homology"/>
<protein>
    <recommendedName>
        <fullName evidence="1">NAD-dependent malic enzyme</fullName>
        <shortName evidence="1">NAD-ME</shortName>
        <ecNumber evidence="1">1.1.1.38</ecNumber>
    </recommendedName>
</protein>
<sequence>MEPKTKKQRSLYIPYAGPVLLEFPLLNKGSAFSMEERRNFNLLGLLPEVVETIEEQAERAWIQYQGFKTEIDKHIYLRNIQDTNETLFYRLVNNHLDEMMPVIYTPTVGAACERFSEIYRRSRGVFISYQNRHNMDDILQNVPNHNIKVIVVTDGERILGLGDQGIGGMGIPIGKLSLYTACGGISPAYTLPVVLDVGTNNQQLLNDPLYMGWRNPRITDDEYYEFVDEFIQAVKQRWPDVLLQFEDFAQKNAMPLLNRYRNEICSFNDDIQGTAAVTVGTLIAASRAAGGQLSEKKIVFLGAGSAGCGIAEMIIAQTQREGLSEETARQKVFMVDRFGLLTDKMPNLLPFQTKLVQKRENLSDWDTDSDVLSLLDVVRNVKPDILIGVSGQTGLFTEEIIREMHKHCPRPIVMPLSNPTSRVEATPQDIIAWTEGNALVATGSPFNPVVWKDKIYPIAQCNNAFIFPGIGLGVIASGASRITDEMLMSASETLAQYSPLVLNGEGLVLPELKDIQKVSRAIAFAVGKMAQQQGVAVKTSAEALQQAIDDNFWQAEYRDYRRTSI</sequence>